<accession>A7GZJ4</accession>
<protein>
    <recommendedName>
        <fullName evidence="1">Elongation factor G</fullName>
        <shortName evidence="1">EF-G</shortName>
    </recommendedName>
</protein>
<comment type="function">
    <text evidence="1">Catalyzes the GTP-dependent ribosomal translocation step during translation elongation. During this step, the ribosome changes from the pre-translocational (PRE) to the post-translocational (POST) state as the newly formed A-site-bound peptidyl-tRNA and P-site-bound deacylated tRNA move to the P and E sites, respectively. Catalyzes the coordinated movement of the two tRNA molecules, the mRNA and conformational changes in the ribosome.</text>
</comment>
<comment type="subcellular location">
    <subcellularLocation>
        <location evidence="1">Cytoplasm</location>
    </subcellularLocation>
</comment>
<comment type="similarity">
    <text evidence="1">Belongs to the TRAFAC class translation factor GTPase superfamily. Classic translation factor GTPase family. EF-G/EF-2 subfamily.</text>
</comment>
<feature type="chain" id="PRO_0000335835" description="Elongation factor G">
    <location>
        <begin position="1"/>
        <end position="692"/>
    </location>
</feature>
<feature type="domain" description="tr-type G">
    <location>
        <begin position="9"/>
        <end position="284"/>
    </location>
</feature>
<feature type="binding site" evidence="1">
    <location>
        <begin position="18"/>
        <end position="25"/>
    </location>
    <ligand>
        <name>GTP</name>
        <dbReference type="ChEBI" id="CHEBI:37565"/>
    </ligand>
</feature>
<feature type="binding site" evidence="1">
    <location>
        <begin position="82"/>
        <end position="86"/>
    </location>
    <ligand>
        <name>GTP</name>
        <dbReference type="ChEBI" id="CHEBI:37565"/>
    </ligand>
</feature>
<feature type="binding site" evidence="1">
    <location>
        <begin position="136"/>
        <end position="139"/>
    </location>
    <ligand>
        <name>GTP</name>
        <dbReference type="ChEBI" id="CHEBI:37565"/>
    </ligand>
</feature>
<organism>
    <name type="scientific">Campylobacter curvus (strain 525.92)</name>
    <dbReference type="NCBI Taxonomy" id="360105"/>
    <lineage>
        <taxon>Bacteria</taxon>
        <taxon>Pseudomonadati</taxon>
        <taxon>Campylobacterota</taxon>
        <taxon>Epsilonproteobacteria</taxon>
        <taxon>Campylobacterales</taxon>
        <taxon>Campylobacteraceae</taxon>
        <taxon>Campylobacter</taxon>
    </lineage>
</organism>
<evidence type="ECO:0000255" key="1">
    <source>
        <dbReference type="HAMAP-Rule" id="MF_00054"/>
    </source>
</evidence>
<keyword id="KW-0963">Cytoplasm</keyword>
<keyword id="KW-0251">Elongation factor</keyword>
<keyword id="KW-0342">GTP-binding</keyword>
<keyword id="KW-0547">Nucleotide-binding</keyword>
<keyword id="KW-0648">Protein biosynthesis</keyword>
<keyword id="KW-1185">Reference proteome</keyword>
<reference key="1">
    <citation type="submission" date="2007-07" db="EMBL/GenBank/DDBJ databases">
        <title>Genome sequence of Campylobacter curvus 525.92 isolated from human feces.</title>
        <authorList>
            <person name="Fouts D.E."/>
            <person name="Mongodin E.F."/>
            <person name="Puiu D."/>
            <person name="Sebastian Y."/>
            <person name="Miller W.G."/>
            <person name="Mandrell R.E."/>
            <person name="Lastovica A.J."/>
            <person name="Nelson K.E."/>
        </authorList>
    </citation>
    <scope>NUCLEOTIDE SEQUENCE [LARGE SCALE GENOMIC DNA]</scope>
    <source>
        <strain>525.92</strain>
    </source>
</reference>
<proteinExistence type="inferred from homology"/>
<sequence>MADRKTPLHMVRNIGIAAHIDAGKTTTSERILFFTGMSHKIGEVHDGAATMDWMEQEKERGITITSAATTCFWKQHQINLIDTPGHVDFTIEVERSMRVLDGAVAVFCSVGGVQPQSETVWRQANKYHVPRIVFVNKMDRIGANFYNVESQIRNRLKANPVPIQIPIGAEDDFKGVIDLVRMKAYVWEDDKKPTDYVEKEIPAELLEKAQEYRAKLIEAVSETDDSLMEKFFSGEELSEEEIKKGIKAGCLRMSIIPMLCGTAFKNKGIQPLLNAVVDYLPAPDEIEAIKGVYEDGTEVTVESTDDGEFAALAFKIMTDPFVGQLTFIRVYRGSLESGSYAYNTVQDSKERIGRLLKMHSNKREEISVLHAGEIGAVVGLKNTLTGDTLASEKDKVILEKMDFPEPVISVAVEPKTKADQEKMAIALQKLAQEDPSFRVNTDEESGQTIISGMGELHLEIIVDRMLREFKVDAEVGQPQVAYRETIRKPVEQEYKYAKQSGGRGQYGHVFLRIEPLEPASGFEFVNDIKGGVVPKEYIPAVEKGCREALQNGVLAGYPVEDVKVTLYDGSYHEVDSSEMAFKLAASMGFKEGARKANPVILEPMMKVEVETPEEYMGDVIGDLNKRRGQVSSMDERNGSKIITAFCPLAQMFGYSTDLRSGTQGRATYSMEFDHYEEVPKNVSEEIIKKRNG</sequence>
<dbReference type="EMBL" id="CP000767">
    <property type="protein sequence ID" value="EAU01321.1"/>
    <property type="molecule type" value="Genomic_DNA"/>
</dbReference>
<dbReference type="RefSeq" id="WP_011992520.1">
    <property type="nucleotide sequence ID" value="NC_009715.2"/>
</dbReference>
<dbReference type="SMR" id="A7GZJ4"/>
<dbReference type="STRING" id="360105.CCV52592_0189"/>
<dbReference type="GeneID" id="61002645"/>
<dbReference type="KEGG" id="ccv:CCV52592_0189"/>
<dbReference type="HOGENOM" id="CLU_002794_4_1_7"/>
<dbReference type="OrthoDB" id="9804431at2"/>
<dbReference type="Proteomes" id="UP000006380">
    <property type="component" value="Chromosome"/>
</dbReference>
<dbReference type="GO" id="GO:0005737">
    <property type="term" value="C:cytoplasm"/>
    <property type="evidence" value="ECO:0007669"/>
    <property type="project" value="UniProtKB-SubCell"/>
</dbReference>
<dbReference type="GO" id="GO:0005525">
    <property type="term" value="F:GTP binding"/>
    <property type="evidence" value="ECO:0007669"/>
    <property type="project" value="UniProtKB-UniRule"/>
</dbReference>
<dbReference type="GO" id="GO:0003924">
    <property type="term" value="F:GTPase activity"/>
    <property type="evidence" value="ECO:0007669"/>
    <property type="project" value="InterPro"/>
</dbReference>
<dbReference type="GO" id="GO:0003746">
    <property type="term" value="F:translation elongation factor activity"/>
    <property type="evidence" value="ECO:0007669"/>
    <property type="project" value="UniProtKB-UniRule"/>
</dbReference>
<dbReference type="GO" id="GO:0032790">
    <property type="term" value="P:ribosome disassembly"/>
    <property type="evidence" value="ECO:0007669"/>
    <property type="project" value="TreeGrafter"/>
</dbReference>
<dbReference type="CDD" id="cd01886">
    <property type="entry name" value="EF-G"/>
    <property type="match status" value="1"/>
</dbReference>
<dbReference type="CDD" id="cd16262">
    <property type="entry name" value="EFG_III"/>
    <property type="match status" value="1"/>
</dbReference>
<dbReference type="CDD" id="cd01434">
    <property type="entry name" value="EFG_mtEFG1_IV"/>
    <property type="match status" value="1"/>
</dbReference>
<dbReference type="CDD" id="cd03713">
    <property type="entry name" value="EFG_mtEFG_C"/>
    <property type="match status" value="1"/>
</dbReference>
<dbReference type="CDD" id="cd04088">
    <property type="entry name" value="EFG_mtEFG_II"/>
    <property type="match status" value="1"/>
</dbReference>
<dbReference type="FunFam" id="2.40.30.10:FF:000006">
    <property type="entry name" value="Elongation factor G"/>
    <property type="match status" value="1"/>
</dbReference>
<dbReference type="FunFam" id="3.30.230.10:FF:000003">
    <property type="entry name" value="Elongation factor G"/>
    <property type="match status" value="1"/>
</dbReference>
<dbReference type="FunFam" id="3.30.70.240:FF:000001">
    <property type="entry name" value="Elongation factor G"/>
    <property type="match status" value="1"/>
</dbReference>
<dbReference type="FunFam" id="3.30.70.870:FF:000001">
    <property type="entry name" value="Elongation factor G"/>
    <property type="match status" value="1"/>
</dbReference>
<dbReference type="FunFam" id="3.40.50.300:FF:000029">
    <property type="entry name" value="Elongation factor G"/>
    <property type="match status" value="1"/>
</dbReference>
<dbReference type="Gene3D" id="3.30.230.10">
    <property type="match status" value="1"/>
</dbReference>
<dbReference type="Gene3D" id="3.30.70.240">
    <property type="match status" value="1"/>
</dbReference>
<dbReference type="Gene3D" id="3.30.70.870">
    <property type="entry name" value="Elongation Factor G (Translational Gtpase), domain 3"/>
    <property type="match status" value="1"/>
</dbReference>
<dbReference type="Gene3D" id="3.40.50.300">
    <property type="entry name" value="P-loop containing nucleotide triphosphate hydrolases"/>
    <property type="match status" value="1"/>
</dbReference>
<dbReference type="Gene3D" id="2.40.30.10">
    <property type="entry name" value="Translation factors"/>
    <property type="match status" value="1"/>
</dbReference>
<dbReference type="HAMAP" id="MF_00054_B">
    <property type="entry name" value="EF_G_EF_2_B"/>
    <property type="match status" value="1"/>
</dbReference>
<dbReference type="InterPro" id="IPR053905">
    <property type="entry name" value="EF-G-like_DII"/>
</dbReference>
<dbReference type="InterPro" id="IPR041095">
    <property type="entry name" value="EFG_II"/>
</dbReference>
<dbReference type="InterPro" id="IPR009022">
    <property type="entry name" value="EFG_III"/>
</dbReference>
<dbReference type="InterPro" id="IPR035647">
    <property type="entry name" value="EFG_III/V"/>
</dbReference>
<dbReference type="InterPro" id="IPR047872">
    <property type="entry name" value="EFG_IV"/>
</dbReference>
<dbReference type="InterPro" id="IPR035649">
    <property type="entry name" value="EFG_V"/>
</dbReference>
<dbReference type="InterPro" id="IPR000640">
    <property type="entry name" value="EFG_V-like"/>
</dbReference>
<dbReference type="InterPro" id="IPR031157">
    <property type="entry name" value="G_TR_CS"/>
</dbReference>
<dbReference type="InterPro" id="IPR027417">
    <property type="entry name" value="P-loop_NTPase"/>
</dbReference>
<dbReference type="InterPro" id="IPR020568">
    <property type="entry name" value="Ribosomal_Su5_D2-typ_SF"/>
</dbReference>
<dbReference type="InterPro" id="IPR014721">
    <property type="entry name" value="Ribsml_uS5_D2-typ_fold_subgr"/>
</dbReference>
<dbReference type="InterPro" id="IPR005225">
    <property type="entry name" value="Small_GTP-bd"/>
</dbReference>
<dbReference type="InterPro" id="IPR000795">
    <property type="entry name" value="T_Tr_GTP-bd_dom"/>
</dbReference>
<dbReference type="InterPro" id="IPR009000">
    <property type="entry name" value="Transl_B-barrel_sf"/>
</dbReference>
<dbReference type="InterPro" id="IPR004540">
    <property type="entry name" value="Transl_elong_EFG/EF2"/>
</dbReference>
<dbReference type="InterPro" id="IPR005517">
    <property type="entry name" value="Transl_elong_EFG/EF2_IV"/>
</dbReference>
<dbReference type="NCBIfam" id="TIGR00484">
    <property type="entry name" value="EF-G"/>
    <property type="match status" value="1"/>
</dbReference>
<dbReference type="NCBIfam" id="NF009379">
    <property type="entry name" value="PRK12740.1-3"/>
    <property type="match status" value="1"/>
</dbReference>
<dbReference type="NCBIfam" id="NF009381">
    <property type="entry name" value="PRK12740.1-5"/>
    <property type="match status" value="1"/>
</dbReference>
<dbReference type="NCBIfam" id="TIGR00231">
    <property type="entry name" value="small_GTP"/>
    <property type="match status" value="1"/>
</dbReference>
<dbReference type="PANTHER" id="PTHR43261:SF1">
    <property type="entry name" value="RIBOSOME-RELEASING FACTOR 2, MITOCHONDRIAL"/>
    <property type="match status" value="1"/>
</dbReference>
<dbReference type="PANTHER" id="PTHR43261">
    <property type="entry name" value="TRANSLATION ELONGATION FACTOR G-RELATED"/>
    <property type="match status" value="1"/>
</dbReference>
<dbReference type="Pfam" id="PF22042">
    <property type="entry name" value="EF-G_D2"/>
    <property type="match status" value="1"/>
</dbReference>
<dbReference type="Pfam" id="PF00679">
    <property type="entry name" value="EFG_C"/>
    <property type="match status" value="1"/>
</dbReference>
<dbReference type="Pfam" id="PF14492">
    <property type="entry name" value="EFG_III"/>
    <property type="match status" value="1"/>
</dbReference>
<dbReference type="Pfam" id="PF03764">
    <property type="entry name" value="EFG_IV"/>
    <property type="match status" value="1"/>
</dbReference>
<dbReference type="Pfam" id="PF00009">
    <property type="entry name" value="GTP_EFTU"/>
    <property type="match status" value="1"/>
</dbReference>
<dbReference type="PRINTS" id="PR00315">
    <property type="entry name" value="ELONGATNFCT"/>
</dbReference>
<dbReference type="SMART" id="SM00838">
    <property type="entry name" value="EFG_C"/>
    <property type="match status" value="1"/>
</dbReference>
<dbReference type="SMART" id="SM00889">
    <property type="entry name" value="EFG_IV"/>
    <property type="match status" value="1"/>
</dbReference>
<dbReference type="SUPFAM" id="SSF54980">
    <property type="entry name" value="EF-G C-terminal domain-like"/>
    <property type="match status" value="2"/>
</dbReference>
<dbReference type="SUPFAM" id="SSF52540">
    <property type="entry name" value="P-loop containing nucleoside triphosphate hydrolases"/>
    <property type="match status" value="1"/>
</dbReference>
<dbReference type="SUPFAM" id="SSF54211">
    <property type="entry name" value="Ribosomal protein S5 domain 2-like"/>
    <property type="match status" value="1"/>
</dbReference>
<dbReference type="SUPFAM" id="SSF50447">
    <property type="entry name" value="Translation proteins"/>
    <property type="match status" value="1"/>
</dbReference>
<dbReference type="PROSITE" id="PS00301">
    <property type="entry name" value="G_TR_1"/>
    <property type="match status" value="1"/>
</dbReference>
<dbReference type="PROSITE" id="PS51722">
    <property type="entry name" value="G_TR_2"/>
    <property type="match status" value="1"/>
</dbReference>
<name>EFG_CAMC5</name>
<gene>
    <name evidence="1" type="primary">fusA</name>
    <name type="ordered locus">Ccur92_13320</name>
    <name type="ORF">CCV52592_0189</name>
</gene>